<proteinExistence type="inferred from homology"/>
<gene>
    <name evidence="1" type="primary">rplA</name>
    <name type="ordered locus">FMG_0540</name>
</gene>
<reference key="1">
    <citation type="journal article" date="2008" name="DNA Res.">
        <title>Complete genome sequence of Finegoldia magna, an anaerobic opportunistic pathogen.</title>
        <authorList>
            <person name="Goto T."/>
            <person name="Yamashita A."/>
            <person name="Hirakawa H."/>
            <person name="Matsutani M."/>
            <person name="Todo K."/>
            <person name="Ohshima K."/>
            <person name="Toh H."/>
            <person name="Miyamoto K."/>
            <person name="Kuhara S."/>
            <person name="Hattori M."/>
            <person name="Shimizu T."/>
            <person name="Akimoto S."/>
        </authorList>
    </citation>
    <scope>NUCLEOTIDE SEQUENCE [LARGE SCALE GENOMIC DNA]</scope>
    <source>
        <strain>ATCC 29328 / DSM 20472 / WAL 2508</strain>
    </source>
</reference>
<comment type="function">
    <text evidence="1">Binds directly to 23S rRNA. The L1 stalk is quite mobile in the ribosome, and is involved in E site tRNA release.</text>
</comment>
<comment type="function">
    <text evidence="1">Protein L1 is also a translational repressor protein, it controls the translation of the L11 operon by binding to its mRNA.</text>
</comment>
<comment type="subunit">
    <text evidence="1">Part of the 50S ribosomal subunit.</text>
</comment>
<comment type="similarity">
    <text evidence="1">Belongs to the universal ribosomal protein uL1 family.</text>
</comment>
<sequence>MAKKGKKYQESAKLIDRTVEYKLDEASKLVVETAKAKFDESVELHAKLGVDSRHADQQVRGTIVLPHGTGKDQKVAVFAKGEKAEEAKAAGADFVGAEDLAEKIQKEGWLGFDVAVATPDMMGVVGRIGRILGPQGLMPNPKAGTVTMDVTSAIKEIKAGKVEYRTDKSNIIHVPVGKVSFGEEKIAENINALMQAILKAKPASSKGKYIRSLTIASTMGPGIKVNPLQFAKE</sequence>
<dbReference type="EMBL" id="AP008971">
    <property type="protein sequence ID" value="BAG07958.1"/>
    <property type="molecule type" value="Genomic_DNA"/>
</dbReference>
<dbReference type="RefSeq" id="WP_002838605.1">
    <property type="nucleotide sequence ID" value="NC_010376.1"/>
</dbReference>
<dbReference type="SMR" id="B0S062"/>
<dbReference type="STRING" id="334413.FMG_0540"/>
<dbReference type="GeneID" id="60839911"/>
<dbReference type="KEGG" id="fma:FMG_0540"/>
<dbReference type="eggNOG" id="COG0081">
    <property type="taxonomic scope" value="Bacteria"/>
</dbReference>
<dbReference type="HOGENOM" id="CLU_062853_0_0_9"/>
<dbReference type="Proteomes" id="UP000001319">
    <property type="component" value="Chromosome"/>
</dbReference>
<dbReference type="GO" id="GO:0015934">
    <property type="term" value="C:large ribosomal subunit"/>
    <property type="evidence" value="ECO:0007669"/>
    <property type="project" value="InterPro"/>
</dbReference>
<dbReference type="GO" id="GO:0019843">
    <property type="term" value="F:rRNA binding"/>
    <property type="evidence" value="ECO:0007669"/>
    <property type="project" value="UniProtKB-UniRule"/>
</dbReference>
<dbReference type="GO" id="GO:0003735">
    <property type="term" value="F:structural constituent of ribosome"/>
    <property type="evidence" value="ECO:0007669"/>
    <property type="project" value="InterPro"/>
</dbReference>
<dbReference type="GO" id="GO:0000049">
    <property type="term" value="F:tRNA binding"/>
    <property type="evidence" value="ECO:0007669"/>
    <property type="project" value="UniProtKB-KW"/>
</dbReference>
<dbReference type="GO" id="GO:0006417">
    <property type="term" value="P:regulation of translation"/>
    <property type="evidence" value="ECO:0007669"/>
    <property type="project" value="UniProtKB-KW"/>
</dbReference>
<dbReference type="GO" id="GO:0006412">
    <property type="term" value="P:translation"/>
    <property type="evidence" value="ECO:0007669"/>
    <property type="project" value="UniProtKB-UniRule"/>
</dbReference>
<dbReference type="CDD" id="cd00403">
    <property type="entry name" value="Ribosomal_L1"/>
    <property type="match status" value="1"/>
</dbReference>
<dbReference type="FunFam" id="3.40.50.790:FF:000001">
    <property type="entry name" value="50S ribosomal protein L1"/>
    <property type="match status" value="1"/>
</dbReference>
<dbReference type="Gene3D" id="3.30.190.20">
    <property type="match status" value="1"/>
</dbReference>
<dbReference type="Gene3D" id="3.40.50.790">
    <property type="match status" value="1"/>
</dbReference>
<dbReference type="HAMAP" id="MF_01318_B">
    <property type="entry name" value="Ribosomal_uL1_B"/>
    <property type="match status" value="1"/>
</dbReference>
<dbReference type="InterPro" id="IPR005878">
    <property type="entry name" value="Ribosom_uL1_bac-type"/>
</dbReference>
<dbReference type="InterPro" id="IPR002143">
    <property type="entry name" value="Ribosomal_uL1"/>
</dbReference>
<dbReference type="InterPro" id="IPR023674">
    <property type="entry name" value="Ribosomal_uL1-like"/>
</dbReference>
<dbReference type="InterPro" id="IPR028364">
    <property type="entry name" value="Ribosomal_uL1/biogenesis"/>
</dbReference>
<dbReference type="InterPro" id="IPR016095">
    <property type="entry name" value="Ribosomal_uL1_3-a/b-sand"/>
</dbReference>
<dbReference type="NCBIfam" id="TIGR01169">
    <property type="entry name" value="rplA_bact"/>
    <property type="match status" value="1"/>
</dbReference>
<dbReference type="PANTHER" id="PTHR36427">
    <property type="entry name" value="54S RIBOSOMAL PROTEIN L1, MITOCHONDRIAL"/>
    <property type="match status" value="1"/>
</dbReference>
<dbReference type="PANTHER" id="PTHR36427:SF3">
    <property type="entry name" value="LARGE RIBOSOMAL SUBUNIT PROTEIN UL1M"/>
    <property type="match status" value="1"/>
</dbReference>
<dbReference type="Pfam" id="PF00687">
    <property type="entry name" value="Ribosomal_L1"/>
    <property type="match status" value="1"/>
</dbReference>
<dbReference type="PIRSF" id="PIRSF002155">
    <property type="entry name" value="Ribosomal_L1"/>
    <property type="match status" value="1"/>
</dbReference>
<dbReference type="SUPFAM" id="SSF56808">
    <property type="entry name" value="Ribosomal protein L1"/>
    <property type="match status" value="1"/>
</dbReference>
<evidence type="ECO:0000255" key="1">
    <source>
        <dbReference type="HAMAP-Rule" id="MF_01318"/>
    </source>
</evidence>
<evidence type="ECO:0000305" key="2"/>
<feature type="chain" id="PRO_1000141406" description="Large ribosomal subunit protein uL1">
    <location>
        <begin position="1"/>
        <end position="233"/>
    </location>
</feature>
<keyword id="KW-1185">Reference proteome</keyword>
<keyword id="KW-0678">Repressor</keyword>
<keyword id="KW-0687">Ribonucleoprotein</keyword>
<keyword id="KW-0689">Ribosomal protein</keyword>
<keyword id="KW-0694">RNA-binding</keyword>
<keyword id="KW-0699">rRNA-binding</keyword>
<keyword id="KW-0810">Translation regulation</keyword>
<keyword id="KW-0820">tRNA-binding</keyword>
<organism>
    <name type="scientific">Finegoldia magna (strain ATCC 29328 / DSM 20472 / WAL 2508)</name>
    <name type="common">Peptostreptococcus magnus</name>
    <dbReference type="NCBI Taxonomy" id="334413"/>
    <lineage>
        <taxon>Bacteria</taxon>
        <taxon>Bacillati</taxon>
        <taxon>Bacillota</taxon>
        <taxon>Tissierellia</taxon>
        <taxon>Tissierellales</taxon>
        <taxon>Peptoniphilaceae</taxon>
        <taxon>Finegoldia</taxon>
    </lineage>
</organism>
<accession>B0S062</accession>
<name>RL1_FINM2</name>
<protein>
    <recommendedName>
        <fullName evidence="1">Large ribosomal subunit protein uL1</fullName>
    </recommendedName>
    <alternativeName>
        <fullName evidence="2">50S ribosomal protein L1</fullName>
    </alternativeName>
</protein>